<gene>
    <name evidence="1" type="primary">psbB</name>
</gene>
<accession>Q6ENT8</accession>
<feature type="chain" id="PRO_0000226925" description="Photosystem II CP47 reaction center protein">
    <location>
        <begin position="1"/>
        <end position="508"/>
    </location>
</feature>
<feature type="transmembrane region" description="Helical" evidence="1">
    <location>
        <begin position="21"/>
        <end position="36"/>
    </location>
</feature>
<feature type="transmembrane region" description="Helical" evidence="1">
    <location>
        <begin position="101"/>
        <end position="115"/>
    </location>
</feature>
<feature type="transmembrane region" description="Helical" evidence="1">
    <location>
        <begin position="140"/>
        <end position="156"/>
    </location>
</feature>
<feature type="transmembrane region" description="Helical" evidence="1">
    <location>
        <begin position="203"/>
        <end position="218"/>
    </location>
</feature>
<feature type="transmembrane region" description="Helical" evidence="1">
    <location>
        <begin position="237"/>
        <end position="252"/>
    </location>
</feature>
<feature type="transmembrane region" description="Helical" evidence="1">
    <location>
        <begin position="457"/>
        <end position="472"/>
    </location>
</feature>
<sequence length="508" mass="56106">MGLPWYRVHTVVLNDPGRLLSVHIMHTALVSGWAGSMALYELAVFDPSDPVLDPMWRQGMFVIPFMTRLGITNSWGGWSISGGTVTNPGIWSYEGVAGAHIVFSGLCFLAAIWHWVYWDLEIFCDERTGKPSLDLPKIFGIHLFLAGVACFGFGAFHVTGLYGPGIWVSDPYGLTGKVQAVNPAWGAEGFDPFVPGGIASHHIAAGTLGILAGLFHLSVRPPQRLYKGLRMGNIETVLSSSIAAVFFAAFVVAGTMWYGSATTPIELFGPTRYQWDQGYFQQEIYRRVSDGLAENLSLSEAWSKIPEKLAFYDYIGNNPAKGGLFRAGSMDNGDGIAVGWLGHPVFRDKEGRELFVRRMPTFFETFPVVLVDEEGIVRADVPFRRAESKYSVEQVGVTVEFYGGELNGVSYSDPATVKKYARRAQLGEIFELDRATLKSDGVFRSSPRGWFTFGHATFALLFFFGHIWHGARTLFRDVFAGIDPDLDAQVEFGTFQKVGDPTTRRQAA</sequence>
<geneLocation type="chloroplast"/>
<keyword id="KW-0148">Chlorophyll</keyword>
<keyword id="KW-0150">Chloroplast</keyword>
<keyword id="KW-0157">Chromophore</keyword>
<keyword id="KW-0472">Membrane</keyword>
<keyword id="KW-0602">Photosynthesis</keyword>
<keyword id="KW-0604">Photosystem II</keyword>
<keyword id="KW-0934">Plastid</keyword>
<keyword id="KW-0793">Thylakoid</keyword>
<keyword id="KW-0812">Transmembrane</keyword>
<keyword id="KW-1133">Transmembrane helix</keyword>
<name>PSBB_SACOF</name>
<organism>
    <name type="scientific">Saccharum officinarum</name>
    <name type="common">Sugarcane</name>
    <dbReference type="NCBI Taxonomy" id="4547"/>
    <lineage>
        <taxon>Eukaryota</taxon>
        <taxon>Viridiplantae</taxon>
        <taxon>Streptophyta</taxon>
        <taxon>Embryophyta</taxon>
        <taxon>Tracheophyta</taxon>
        <taxon>Spermatophyta</taxon>
        <taxon>Magnoliopsida</taxon>
        <taxon>Liliopsida</taxon>
        <taxon>Poales</taxon>
        <taxon>Poaceae</taxon>
        <taxon>PACMAD clade</taxon>
        <taxon>Panicoideae</taxon>
        <taxon>Andropogonodae</taxon>
        <taxon>Andropogoneae</taxon>
        <taxon>Saccharinae</taxon>
        <taxon>Saccharum</taxon>
        <taxon>Saccharum officinarum species complex</taxon>
    </lineage>
</organism>
<proteinExistence type="inferred from homology"/>
<reference key="1">
    <citation type="journal article" date="2004" name="DNA Res.">
        <title>Complete nucleotide sequence of the sugarcane (Saccharum officinarum) chloroplast genome: a comparative analysis of four monocot chloroplast genomes.</title>
        <authorList>
            <person name="Asano T."/>
            <person name="Tsudzuki T."/>
            <person name="Takahashi S."/>
            <person name="Shimada H."/>
            <person name="Kadowaki K."/>
        </authorList>
    </citation>
    <scope>NUCLEOTIDE SEQUENCE [LARGE SCALE GENOMIC DNA]</scope>
</reference>
<evidence type="ECO:0000255" key="1">
    <source>
        <dbReference type="HAMAP-Rule" id="MF_01495"/>
    </source>
</evidence>
<comment type="function">
    <text evidence="1">One of the components of the core complex of photosystem II (PSII). It binds chlorophyll and helps catalyze the primary light-induced photochemical processes of PSII. PSII is a light-driven water:plastoquinone oxidoreductase, using light energy to abstract electrons from H(2)O, generating O(2) and a proton gradient subsequently used for ATP formation.</text>
</comment>
<comment type="cofactor">
    <text evidence="1">Binds multiple chlorophylls. PSII binds additional chlorophylls, carotenoids and specific lipids.</text>
</comment>
<comment type="subunit">
    <text evidence="1">PSII is composed of 1 copy each of membrane proteins PsbA, PsbB, PsbC, PsbD, PsbE, PsbF, PsbH, PsbI, PsbJ, PsbK, PsbL, PsbM, PsbT, PsbX, PsbY, PsbZ, Psb30/Ycf12, at least 3 peripheral proteins of the oxygen-evolving complex and a large number of cofactors. It forms dimeric complexes.</text>
</comment>
<comment type="subcellular location">
    <subcellularLocation>
        <location evidence="1">Plastid</location>
        <location evidence="1">Chloroplast thylakoid membrane</location>
        <topology evidence="1">Multi-pass membrane protein</topology>
    </subcellularLocation>
</comment>
<comment type="similarity">
    <text evidence="1">Belongs to the PsbB/PsbC family. PsbB subfamily.</text>
</comment>
<protein>
    <recommendedName>
        <fullName evidence="1">Photosystem II CP47 reaction center protein</fullName>
    </recommendedName>
    <alternativeName>
        <fullName evidence="1">PSII 47 kDa protein</fullName>
    </alternativeName>
    <alternativeName>
        <fullName evidence="1">Protein CP-47</fullName>
    </alternativeName>
</protein>
<dbReference type="EMBL" id="AP006714">
    <property type="protein sequence ID" value="BAD27318.1"/>
    <property type="molecule type" value="Genomic_DNA"/>
</dbReference>
<dbReference type="RefSeq" id="YP_009389596.1">
    <property type="nucleotide sequence ID" value="NC_035224.1"/>
</dbReference>
<dbReference type="SMR" id="Q6ENT8"/>
<dbReference type="GeneID" id="33347770"/>
<dbReference type="GO" id="GO:0009535">
    <property type="term" value="C:chloroplast thylakoid membrane"/>
    <property type="evidence" value="ECO:0007669"/>
    <property type="project" value="UniProtKB-SubCell"/>
</dbReference>
<dbReference type="GO" id="GO:0009523">
    <property type="term" value="C:photosystem II"/>
    <property type="evidence" value="ECO:0007669"/>
    <property type="project" value="UniProtKB-KW"/>
</dbReference>
<dbReference type="GO" id="GO:0016168">
    <property type="term" value="F:chlorophyll binding"/>
    <property type="evidence" value="ECO:0007669"/>
    <property type="project" value="UniProtKB-UniRule"/>
</dbReference>
<dbReference type="GO" id="GO:0045156">
    <property type="term" value="F:electron transporter, transferring electrons within the cyclic electron transport pathway of photosynthesis activity"/>
    <property type="evidence" value="ECO:0007669"/>
    <property type="project" value="InterPro"/>
</dbReference>
<dbReference type="GO" id="GO:0009772">
    <property type="term" value="P:photosynthetic electron transport in photosystem II"/>
    <property type="evidence" value="ECO:0007669"/>
    <property type="project" value="InterPro"/>
</dbReference>
<dbReference type="FunFam" id="3.10.680.10:FF:000001">
    <property type="entry name" value="Photosystem II CP47 reaction center protein"/>
    <property type="match status" value="1"/>
</dbReference>
<dbReference type="Gene3D" id="3.10.680.10">
    <property type="entry name" value="Photosystem II CP47 reaction center protein"/>
    <property type="match status" value="1"/>
</dbReference>
<dbReference type="HAMAP" id="MF_01495">
    <property type="entry name" value="PSII_PsbB_CP47"/>
    <property type="match status" value="1"/>
</dbReference>
<dbReference type="InterPro" id="IPR000932">
    <property type="entry name" value="PS_antenna-like"/>
</dbReference>
<dbReference type="InterPro" id="IPR036001">
    <property type="entry name" value="PS_II_antenna-like_sf"/>
</dbReference>
<dbReference type="InterPro" id="IPR017486">
    <property type="entry name" value="PSII_PsbB"/>
</dbReference>
<dbReference type="NCBIfam" id="TIGR03039">
    <property type="entry name" value="PS_II_CP47"/>
    <property type="match status" value="1"/>
</dbReference>
<dbReference type="PANTHER" id="PTHR33180">
    <property type="entry name" value="PHOTOSYSTEM II CP43 REACTION CENTER PROTEIN"/>
    <property type="match status" value="1"/>
</dbReference>
<dbReference type="PANTHER" id="PTHR33180:SF37">
    <property type="entry name" value="PHOTOSYSTEM II CP43 REACTION CENTER PROTEIN"/>
    <property type="match status" value="1"/>
</dbReference>
<dbReference type="Pfam" id="PF00421">
    <property type="entry name" value="PSII"/>
    <property type="match status" value="1"/>
</dbReference>
<dbReference type="SUPFAM" id="SSF161077">
    <property type="entry name" value="Photosystem II antenna protein-like"/>
    <property type="match status" value="1"/>
</dbReference>